<name>TTCA_YERP3</name>
<comment type="function">
    <text evidence="1">Catalyzes the ATP-dependent 2-thiolation of cytidine in position 32 of tRNA, to form 2-thiocytidine (s(2)C32). The sulfur atoms are provided by the cysteine/cysteine desulfurase (IscS) system.</text>
</comment>
<comment type="catalytic activity">
    <reaction evidence="1">
        <text>cytidine(32) in tRNA + S-sulfanyl-L-cysteinyl-[cysteine desulfurase] + AH2 + ATP = 2-thiocytidine(32) in tRNA + L-cysteinyl-[cysteine desulfurase] + A + AMP + diphosphate + H(+)</text>
        <dbReference type="Rhea" id="RHEA:57048"/>
        <dbReference type="Rhea" id="RHEA-COMP:10288"/>
        <dbReference type="Rhea" id="RHEA-COMP:12157"/>
        <dbReference type="Rhea" id="RHEA-COMP:12158"/>
        <dbReference type="Rhea" id="RHEA-COMP:14821"/>
        <dbReference type="ChEBI" id="CHEBI:13193"/>
        <dbReference type="ChEBI" id="CHEBI:15378"/>
        <dbReference type="ChEBI" id="CHEBI:17499"/>
        <dbReference type="ChEBI" id="CHEBI:29950"/>
        <dbReference type="ChEBI" id="CHEBI:30616"/>
        <dbReference type="ChEBI" id="CHEBI:33019"/>
        <dbReference type="ChEBI" id="CHEBI:61963"/>
        <dbReference type="ChEBI" id="CHEBI:82748"/>
        <dbReference type="ChEBI" id="CHEBI:141453"/>
        <dbReference type="ChEBI" id="CHEBI:456215"/>
    </reaction>
    <physiologicalReaction direction="left-to-right" evidence="1">
        <dbReference type="Rhea" id="RHEA:57049"/>
    </physiologicalReaction>
</comment>
<comment type="cofactor">
    <cofactor evidence="1">
        <name>Mg(2+)</name>
        <dbReference type="ChEBI" id="CHEBI:18420"/>
    </cofactor>
</comment>
<comment type="cofactor">
    <cofactor evidence="1">
        <name>[4Fe-4S] cluster</name>
        <dbReference type="ChEBI" id="CHEBI:49883"/>
    </cofactor>
    <text evidence="1">Binds 1 [4Fe-4S] cluster per subunit. The cluster is chelated by three Cys residues, the fourth Fe has a free coordination site that may bind a sulfur atom transferred from the persulfide of IscS.</text>
</comment>
<comment type="pathway">
    <text evidence="1">tRNA modification.</text>
</comment>
<comment type="subunit">
    <text evidence="1">Homodimer.</text>
</comment>
<comment type="subcellular location">
    <subcellularLocation>
        <location evidence="1">Cytoplasm</location>
    </subcellularLocation>
</comment>
<comment type="miscellaneous">
    <text evidence="1">The thiolation reaction likely consists of two steps: a first activation step by ATP to form an adenylated intermediate of the target base of tRNA, and a second nucleophilic substitution step of the sulfur (S) atom supplied by the hydrosulfide attached to the Fe-S cluster.</text>
</comment>
<comment type="similarity">
    <text evidence="1">Belongs to the TtcA family.</text>
</comment>
<dbReference type="EC" id="2.8.1.-" evidence="1"/>
<dbReference type="EMBL" id="CP000720">
    <property type="protein sequence ID" value="ABS46191.1"/>
    <property type="molecule type" value="Genomic_DNA"/>
</dbReference>
<dbReference type="RefSeq" id="WP_002210992.1">
    <property type="nucleotide sequence ID" value="NC_009708.1"/>
</dbReference>
<dbReference type="SMR" id="A7FHP9"/>
<dbReference type="GeneID" id="57976339"/>
<dbReference type="KEGG" id="ypi:YpsIP31758_1802"/>
<dbReference type="HOGENOM" id="CLU_026481_0_0_6"/>
<dbReference type="Proteomes" id="UP000002412">
    <property type="component" value="Chromosome"/>
</dbReference>
<dbReference type="GO" id="GO:0005737">
    <property type="term" value="C:cytoplasm"/>
    <property type="evidence" value="ECO:0007669"/>
    <property type="project" value="UniProtKB-SubCell"/>
</dbReference>
<dbReference type="GO" id="GO:0051539">
    <property type="term" value="F:4 iron, 4 sulfur cluster binding"/>
    <property type="evidence" value="ECO:0007669"/>
    <property type="project" value="UniProtKB-UniRule"/>
</dbReference>
<dbReference type="GO" id="GO:0005524">
    <property type="term" value="F:ATP binding"/>
    <property type="evidence" value="ECO:0007669"/>
    <property type="project" value="UniProtKB-UniRule"/>
</dbReference>
<dbReference type="GO" id="GO:0000287">
    <property type="term" value="F:magnesium ion binding"/>
    <property type="evidence" value="ECO:0007669"/>
    <property type="project" value="UniProtKB-UniRule"/>
</dbReference>
<dbReference type="GO" id="GO:0016783">
    <property type="term" value="F:sulfurtransferase activity"/>
    <property type="evidence" value="ECO:0007669"/>
    <property type="project" value="UniProtKB-UniRule"/>
</dbReference>
<dbReference type="GO" id="GO:0000049">
    <property type="term" value="F:tRNA binding"/>
    <property type="evidence" value="ECO:0007669"/>
    <property type="project" value="UniProtKB-KW"/>
</dbReference>
<dbReference type="GO" id="GO:0034227">
    <property type="term" value="P:tRNA thio-modification"/>
    <property type="evidence" value="ECO:0007669"/>
    <property type="project" value="UniProtKB-UniRule"/>
</dbReference>
<dbReference type="CDD" id="cd24138">
    <property type="entry name" value="TtcA-like"/>
    <property type="match status" value="1"/>
</dbReference>
<dbReference type="Gene3D" id="3.40.50.620">
    <property type="entry name" value="HUPs"/>
    <property type="match status" value="1"/>
</dbReference>
<dbReference type="HAMAP" id="MF_01850">
    <property type="entry name" value="TtcA"/>
    <property type="match status" value="1"/>
</dbReference>
<dbReference type="InterPro" id="IPR014729">
    <property type="entry name" value="Rossmann-like_a/b/a_fold"/>
</dbReference>
<dbReference type="InterPro" id="IPR011063">
    <property type="entry name" value="TilS/TtcA_N"/>
</dbReference>
<dbReference type="InterPro" id="IPR012089">
    <property type="entry name" value="tRNA_Cyd_32_2_STrfase"/>
</dbReference>
<dbReference type="InterPro" id="IPR035107">
    <property type="entry name" value="tRNA_thiolation_TtcA_Ctu1"/>
</dbReference>
<dbReference type="NCBIfam" id="NF007972">
    <property type="entry name" value="PRK10696.1"/>
    <property type="match status" value="1"/>
</dbReference>
<dbReference type="PANTHER" id="PTHR43686:SF1">
    <property type="entry name" value="AMINOTRAN_5 DOMAIN-CONTAINING PROTEIN"/>
    <property type="match status" value="1"/>
</dbReference>
<dbReference type="PANTHER" id="PTHR43686">
    <property type="entry name" value="SULFURTRANSFERASE-RELATED"/>
    <property type="match status" value="1"/>
</dbReference>
<dbReference type="Pfam" id="PF01171">
    <property type="entry name" value="ATP_bind_3"/>
    <property type="match status" value="1"/>
</dbReference>
<dbReference type="PIRSF" id="PIRSF004976">
    <property type="entry name" value="ATPase_YdaO"/>
    <property type="match status" value="1"/>
</dbReference>
<dbReference type="SUPFAM" id="SSF52402">
    <property type="entry name" value="Adenine nucleotide alpha hydrolases-like"/>
    <property type="match status" value="1"/>
</dbReference>
<organism>
    <name type="scientific">Yersinia pseudotuberculosis serotype O:1b (strain IP 31758)</name>
    <dbReference type="NCBI Taxonomy" id="349747"/>
    <lineage>
        <taxon>Bacteria</taxon>
        <taxon>Pseudomonadati</taxon>
        <taxon>Pseudomonadota</taxon>
        <taxon>Gammaproteobacteria</taxon>
        <taxon>Enterobacterales</taxon>
        <taxon>Yersiniaceae</taxon>
        <taxon>Yersinia</taxon>
    </lineage>
</organism>
<accession>A7FHP9</accession>
<proteinExistence type="inferred from homology"/>
<sequence length="313" mass="35799">MLEKQSVNQKEQYNFNKLQKRLRRNVGQAIADFNMIEEGDRVMVCLSGGKDSYTMLDILQSLQKSAPINFSLIAVNLDQKQPGFPEDILPAYLDKQGVEYKIVEENTYGIVKEIIPEGKTTCSLCSRLRRGILYRTATELGATKIALGHHRDDILQTLFLNMFYGGKLKGMPPKLMSDDGKHIVIRPLAYCREKDIERFAVAREYPIIPCNLCGSQPNLQRQVIKDMLRDWDKQYPGRIETMFSAMQNVVPSHLNDHKLFDFKSITHDSDIIDGGDLAFDREALPLNPVGWQPEDDEDTEKRPPVRLDVLEIK</sequence>
<evidence type="ECO:0000255" key="1">
    <source>
        <dbReference type="HAMAP-Rule" id="MF_01850"/>
    </source>
</evidence>
<evidence type="ECO:0000256" key="2">
    <source>
        <dbReference type="SAM" id="MobiDB-lite"/>
    </source>
</evidence>
<gene>
    <name evidence="1" type="primary">ttcA</name>
    <name type="ordered locus">YpsIP31758_1802</name>
</gene>
<feature type="chain" id="PRO_0000348888" description="tRNA-cytidine(32) 2-sulfurtransferase">
    <location>
        <begin position="1"/>
        <end position="313"/>
    </location>
</feature>
<feature type="region of interest" description="Disordered" evidence="2">
    <location>
        <begin position="288"/>
        <end position="313"/>
    </location>
</feature>
<feature type="short sequence motif" description="PP-loop motif" evidence="1">
    <location>
        <begin position="47"/>
        <end position="52"/>
    </location>
</feature>
<feature type="compositionally biased region" description="Basic and acidic residues" evidence="2">
    <location>
        <begin position="299"/>
        <end position="313"/>
    </location>
</feature>
<feature type="binding site" evidence="1">
    <location>
        <position position="122"/>
    </location>
    <ligand>
        <name>[4Fe-4S] cluster</name>
        <dbReference type="ChEBI" id="CHEBI:49883"/>
    </ligand>
</feature>
<feature type="binding site" evidence="1">
    <location>
        <position position="125"/>
    </location>
    <ligand>
        <name>[4Fe-4S] cluster</name>
        <dbReference type="ChEBI" id="CHEBI:49883"/>
    </ligand>
</feature>
<feature type="binding site" evidence="1">
    <location>
        <position position="213"/>
    </location>
    <ligand>
        <name>[4Fe-4S] cluster</name>
        <dbReference type="ChEBI" id="CHEBI:49883"/>
    </ligand>
</feature>
<keyword id="KW-0004">4Fe-4S</keyword>
<keyword id="KW-0067">ATP-binding</keyword>
<keyword id="KW-0963">Cytoplasm</keyword>
<keyword id="KW-0408">Iron</keyword>
<keyword id="KW-0411">Iron-sulfur</keyword>
<keyword id="KW-0460">Magnesium</keyword>
<keyword id="KW-0479">Metal-binding</keyword>
<keyword id="KW-0547">Nucleotide-binding</keyword>
<keyword id="KW-0694">RNA-binding</keyword>
<keyword id="KW-0808">Transferase</keyword>
<keyword id="KW-0819">tRNA processing</keyword>
<keyword id="KW-0820">tRNA-binding</keyword>
<reference key="1">
    <citation type="journal article" date="2007" name="PLoS Genet.">
        <title>The complete genome sequence of Yersinia pseudotuberculosis IP31758, the causative agent of Far East scarlet-like fever.</title>
        <authorList>
            <person name="Eppinger M."/>
            <person name="Rosovitz M.J."/>
            <person name="Fricke W.F."/>
            <person name="Rasko D.A."/>
            <person name="Kokorina G."/>
            <person name="Fayolle C."/>
            <person name="Lindler L.E."/>
            <person name="Carniel E."/>
            <person name="Ravel J."/>
        </authorList>
    </citation>
    <scope>NUCLEOTIDE SEQUENCE [LARGE SCALE GENOMIC DNA]</scope>
    <source>
        <strain>IP 31758</strain>
    </source>
</reference>
<protein>
    <recommendedName>
        <fullName evidence="1">tRNA-cytidine(32) 2-sulfurtransferase</fullName>
        <ecNumber evidence="1">2.8.1.-</ecNumber>
    </recommendedName>
    <alternativeName>
        <fullName evidence="1">Two-thiocytidine biosynthesis protein A</fullName>
    </alternativeName>
    <alternativeName>
        <fullName evidence="1">tRNA 2-thiocytidine biosynthesis protein TtcA</fullName>
    </alternativeName>
</protein>